<protein>
    <recommendedName>
        <fullName evidence="1">Arginine deiminase</fullName>
        <shortName evidence="1">ADI</shortName>
        <ecNumber evidence="1">3.5.3.6</ecNumber>
    </recommendedName>
    <alternativeName>
        <fullName evidence="1">Arginine dihydrolase</fullName>
        <shortName evidence="1">AD</shortName>
    </alternativeName>
</protein>
<evidence type="ECO:0000255" key="1">
    <source>
        <dbReference type="HAMAP-Rule" id="MF_00242"/>
    </source>
</evidence>
<comment type="catalytic activity">
    <reaction evidence="1">
        <text>L-arginine + H2O = L-citrulline + NH4(+)</text>
        <dbReference type="Rhea" id="RHEA:19597"/>
        <dbReference type="ChEBI" id="CHEBI:15377"/>
        <dbReference type="ChEBI" id="CHEBI:28938"/>
        <dbReference type="ChEBI" id="CHEBI:32682"/>
        <dbReference type="ChEBI" id="CHEBI:57743"/>
        <dbReference type="EC" id="3.5.3.6"/>
    </reaction>
</comment>
<comment type="pathway">
    <text evidence="1">Amino-acid degradation; L-arginine degradation via ADI pathway; carbamoyl phosphate from L-arginine: step 1/2.</text>
</comment>
<comment type="subcellular location">
    <subcellularLocation>
        <location evidence="1">Cytoplasm</location>
    </subcellularLocation>
</comment>
<comment type="similarity">
    <text evidence="1">Belongs to the arginine deiminase family.</text>
</comment>
<gene>
    <name evidence="1" type="primary">arcA</name>
    <name type="ordered locus">SAK_2121</name>
</gene>
<keyword id="KW-0056">Arginine metabolism</keyword>
<keyword id="KW-0963">Cytoplasm</keyword>
<keyword id="KW-0378">Hydrolase</keyword>
<feature type="chain" id="PRO_1000005724" description="Arginine deiminase">
    <location>
        <begin position="1"/>
        <end position="410"/>
    </location>
</feature>
<feature type="active site" description="Amidino-cysteine intermediate" evidence="1">
    <location>
        <position position="400"/>
    </location>
</feature>
<name>ARCA_STRA1</name>
<organism>
    <name type="scientific">Streptococcus agalactiae serotype Ia (strain ATCC 27591 / A909 / CDC SS700)</name>
    <dbReference type="NCBI Taxonomy" id="205921"/>
    <lineage>
        <taxon>Bacteria</taxon>
        <taxon>Bacillati</taxon>
        <taxon>Bacillota</taxon>
        <taxon>Bacilli</taxon>
        <taxon>Lactobacillales</taxon>
        <taxon>Streptococcaceae</taxon>
        <taxon>Streptococcus</taxon>
    </lineage>
</organism>
<accession>Q3JYE2</accession>
<reference key="1">
    <citation type="journal article" date="2005" name="Proc. Natl. Acad. Sci. U.S.A.">
        <title>Genome analysis of multiple pathogenic isolates of Streptococcus agalactiae: implications for the microbial 'pan-genome'.</title>
        <authorList>
            <person name="Tettelin H."/>
            <person name="Masignani V."/>
            <person name="Cieslewicz M.J."/>
            <person name="Donati C."/>
            <person name="Medini D."/>
            <person name="Ward N.L."/>
            <person name="Angiuoli S.V."/>
            <person name="Crabtree J."/>
            <person name="Jones A.L."/>
            <person name="Durkin A.S."/>
            <person name="DeBoy R.T."/>
            <person name="Davidsen T.M."/>
            <person name="Mora M."/>
            <person name="Scarselli M."/>
            <person name="Margarit y Ros I."/>
            <person name="Peterson J.D."/>
            <person name="Hauser C.R."/>
            <person name="Sundaram J.P."/>
            <person name="Nelson W.C."/>
            <person name="Madupu R."/>
            <person name="Brinkac L.M."/>
            <person name="Dodson R.J."/>
            <person name="Rosovitz M.J."/>
            <person name="Sullivan S.A."/>
            <person name="Daugherty S.C."/>
            <person name="Haft D.H."/>
            <person name="Selengut J."/>
            <person name="Gwinn M.L."/>
            <person name="Zhou L."/>
            <person name="Zafar N."/>
            <person name="Khouri H."/>
            <person name="Radune D."/>
            <person name="Dimitrov G."/>
            <person name="Watkins K."/>
            <person name="O'Connor K.J."/>
            <person name="Smith S."/>
            <person name="Utterback T.R."/>
            <person name="White O."/>
            <person name="Rubens C.E."/>
            <person name="Grandi G."/>
            <person name="Madoff L.C."/>
            <person name="Kasper D.L."/>
            <person name="Telford J.L."/>
            <person name="Wessels M.R."/>
            <person name="Rappuoli R."/>
            <person name="Fraser C.M."/>
        </authorList>
    </citation>
    <scope>NUCLEOTIDE SEQUENCE [LARGE SCALE GENOMIC DNA]</scope>
    <source>
        <strain>ATCC 27591 / A909 / CDC SS700</strain>
    </source>
</reference>
<dbReference type="EC" id="3.5.3.6" evidence="1"/>
<dbReference type="EMBL" id="CP000114">
    <property type="protein sequence ID" value="ABA44641.1"/>
    <property type="molecule type" value="Genomic_DNA"/>
</dbReference>
<dbReference type="RefSeq" id="WP_000194840.1">
    <property type="nucleotide sequence ID" value="NC_007432.1"/>
</dbReference>
<dbReference type="SMR" id="Q3JYE2"/>
<dbReference type="KEGG" id="sak:SAK_2121"/>
<dbReference type="HOGENOM" id="CLU_052662_0_1_9"/>
<dbReference type="UniPathway" id="UPA00254">
    <property type="reaction ID" value="UER00364"/>
</dbReference>
<dbReference type="GO" id="GO:0005737">
    <property type="term" value="C:cytoplasm"/>
    <property type="evidence" value="ECO:0007669"/>
    <property type="project" value="UniProtKB-SubCell"/>
</dbReference>
<dbReference type="GO" id="GO:0016990">
    <property type="term" value="F:arginine deiminase activity"/>
    <property type="evidence" value="ECO:0007669"/>
    <property type="project" value="UniProtKB-UniRule"/>
</dbReference>
<dbReference type="GO" id="GO:0019547">
    <property type="term" value="P:arginine catabolic process to ornithine"/>
    <property type="evidence" value="ECO:0007669"/>
    <property type="project" value="UniProtKB-UniRule"/>
</dbReference>
<dbReference type="GO" id="GO:0019546">
    <property type="term" value="P:arginine deiminase pathway"/>
    <property type="evidence" value="ECO:0007669"/>
    <property type="project" value="TreeGrafter"/>
</dbReference>
<dbReference type="Gene3D" id="1.10.3930.10">
    <property type="entry name" value="Arginine deiminase"/>
    <property type="match status" value="1"/>
</dbReference>
<dbReference type="Gene3D" id="3.75.10.10">
    <property type="entry name" value="L-arginine/glycine Amidinotransferase, Chain A"/>
    <property type="match status" value="1"/>
</dbReference>
<dbReference type="HAMAP" id="MF_00242">
    <property type="entry name" value="Arg_deiminase"/>
    <property type="match status" value="1"/>
</dbReference>
<dbReference type="InterPro" id="IPR003876">
    <property type="entry name" value="Arg_deiminase"/>
</dbReference>
<dbReference type="NCBIfam" id="TIGR01078">
    <property type="entry name" value="arcA"/>
    <property type="match status" value="1"/>
</dbReference>
<dbReference type="NCBIfam" id="NF002381">
    <property type="entry name" value="PRK01388.1"/>
    <property type="match status" value="1"/>
</dbReference>
<dbReference type="PANTHER" id="PTHR47271">
    <property type="entry name" value="ARGININE DEIMINASE"/>
    <property type="match status" value="1"/>
</dbReference>
<dbReference type="PANTHER" id="PTHR47271:SF2">
    <property type="entry name" value="ARGININE DEIMINASE"/>
    <property type="match status" value="1"/>
</dbReference>
<dbReference type="Pfam" id="PF02274">
    <property type="entry name" value="ADI"/>
    <property type="match status" value="1"/>
</dbReference>
<dbReference type="PIRSF" id="PIRSF006356">
    <property type="entry name" value="Arg_deiminase"/>
    <property type="match status" value="1"/>
</dbReference>
<dbReference type="PRINTS" id="PR01466">
    <property type="entry name" value="ARGDEIMINASE"/>
</dbReference>
<dbReference type="SUPFAM" id="SSF55909">
    <property type="entry name" value="Pentein"/>
    <property type="match status" value="1"/>
</dbReference>
<proteinExistence type="inferred from homology"/>
<sequence>MTQTHPIHVFSEIGKLKKVMLHRPGKEIENLMPDYLERLLFDDIPFLEDAQKEHDAFAQALRNEGVEVLYLENLAAESLTNQEIREQFIDEYIGEANVRGRATKKAIRELLLNIKDNKELIEKTMAGIQKSELPEIPSSEKGLTDLVESNYPFAIDPMPNLYFTRDPFATIGNGVSLNHMFSETRNRETLYGKYIFTHHPEYGGKVPMVYDREETTRIEGGDELVLSKDVLAVGISQRTDAASIEKLLVNIFKQNLGFKKVLAFEFANNRKFMHLDTVFTMVDYDKFTIHPEIEGDLRVYSVTYENQDLHIEEEKGDLAVLLAKNLGVEKVELIRCGGDNLVAAGREQWNDGSNTLTIAPGVVVVYNRNTITNAILESKGLKLIKINGSELVRGRGGPRCMSMPFEREDL</sequence>